<name>CHDC_STAA8</name>
<comment type="function">
    <text evidence="1 2 3">Involved in coproporphyrin-dependent heme b biosynthesis (PubMed:25908396). Catalyzes the decarboxylation of Fe-coproporphyrin III (coproheme) to heme b (protoheme IX), the last step of the pathway (By similarity). The reaction occurs in a stepwise manner with a three-propionate harderoheme intermediate (By similarity). Can stimulate the generation of protoporphyrin IX, but not coproporphyrin III, by HemY (PubMed:27597779).</text>
</comment>
<comment type="catalytic activity">
    <reaction evidence="1 2">
        <text>Fe-coproporphyrin III + 2 H2O2 + 2 H(+) = heme b + 2 CO2 + 4 H2O</text>
        <dbReference type="Rhea" id="RHEA:56516"/>
        <dbReference type="ChEBI" id="CHEBI:15377"/>
        <dbReference type="ChEBI" id="CHEBI:15378"/>
        <dbReference type="ChEBI" id="CHEBI:16240"/>
        <dbReference type="ChEBI" id="CHEBI:16526"/>
        <dbReference type="ChEBI" id="CHEBI:60344"/>
        <dbReference type="ChEBI" id="CHEBI:68438"/>
        <dbReference type="EC" id="1.3.98.5"/>
    </reaction>
    <physiologicalReaction direction="left-to-right" evidence="1 2">
        <dbReference type="Rhea" id="RHEA:56517"/>
    </physiologicalReaction>
</comment>
<comment type="catalytic activity">
    <reaction evidence="1">
        <text>Fe-coproporphyrin III + H2O2 + H(+) = harderoheme III + CO2 + 2 H2O</text>
        <dbReference type="Rhea" id="RHEA:57940"/>
        <dbReference type="ChEBI" id="CHEBI:15377"/>
        <dbReference type="ChEBI" id="CHEBI:15378"/>
        <dbReference type="ChEBI" id="CHEBI:16240"/>
        <dbReference type="ChEBI" id="CHEBI:16526"/>
        <dbReference type="ChEBI" id="CHEBI:68438"/>
        <dbReference type="ChEBI" id="CHEBI:142463"/>
    </reaction>
    <physiologicalReaction direction="left-to-right" evidence="1 2">
        <dbReference type="Rhea" id="RHEA:57941"/>
    </physiologicalReaction>
</comment>
<comment type="catalytic activity">
    <reaction evidence="1">
        <text>harderoheme III + H2O2 + H(+) = heme b + CO2 + 2 H2O</text>
        <dbReference type="Rhea" id="RHEA:57944"/>
        <dbReference type="ChEBI" id="CHEBI:15377"/>
        <dbReference type="ChEBI" id="CHEBI:15378"/>
        <dbReference type="ChEBI" id="CHEBI:16240"/>
        <dbReference type="ChEBI" id="CHEBI:16526"/>
        <dbReference type="ChEBI" id="CHEBI:60344"/>
        <dbReference type="ChEBI" id="CHEBI:142463"/>
    </reaction>
    <physiologicalReaction direction="left-to-right" evidence="1 2">
        <dbReference type="Rhea" id="RHEA:57945"/>
    </physiologicalReaction>
</comment>
<comment type="cofactor">
    <cofactor evidence="1">
        <name>Fe-coproporphyrin III</name>
        <dbReference type="ChEBI" id="CHEBI:68438"/>
    </cofactor>
    <text evidence="1 2">Fe-coproporphyrin III acts both as a substrate and a redox cofactor (By similarity). Was originally thought to use heme as a cofactor (PubMed:25908396).</text>
</comment>
<comment type="pathway">
    <text evidence="1 7">Porphyrin-containing compound metabolism; protoheme biosynthesis.</text>
</comment>
<comment type="similarity">
    <text evidence="1 6">Belongs to the ChdC family. Type 1 subfamily.</text>
</comment>
<keyword id="KW-0349">Heme</keyword>
<keyword id="KW-0350">Heme biosynthesis</keyword>
<keyword id="KW-0408">Iron</keyword>
<keyword id="KW-0479">Metal-binding</keyword>
<keyword id="KW-0560">Oxidoreductase</keyword>
<keyword id="KW-1185">Reference proteome</keyword>
<gene>
    <name evidence="1" type="primary">chdC</name>
    <name evidence="4" type="synonym">hemQ</name>
    <name type="ordered locus">SAOUHSC_00573</name>
</gene>
<proteinExistence type="evidence at protein level"/>
<feature type="chain" id="PRO_0000294046" description="Coproheme decarboxylase">
    <location>
        <begin position="1"/>
        <end position="250"/>
    </location>
</feature>
<feature type="active site" evidence="1">
    <location>
        <position position="145"/>
    </location>
</feature>
<feature type="binding site" evidence="1">
    <location>
        <position position="131"/>
    </location>
    <ligand>
        <name>Fe-coproporphyrin III</name>
        <dbReference type="ChEBI" id="CHEBI:68438"/>
    </ligand>
</feature>
<feature type="binding site" evidence="1">
    <location>
        <begin position="145"/>
        <end position="149"/>
    </location>
    <ligand>
        <name>Fe-coproporphyrin III</name>
        <dbReference type="ChEBI" id="CHEBI:68438"/>
    </ligand>
</feature>
<feature type="binding site" description="axial binding residue" evidence="1">
    <location>
        <position position="172"/>
    </location>
    <ligand>
        <name>Fe-coproporphyrin III</name>
        <dbReference type="ChEBI" id="CHEBI:68438"/>
    </ligand>
    <ligandPart>
        <name>Fe</name>
        <dbReference type="ChEBI" id="CHEBI:18248"/>
    </ligandPart>
</feature>
<feature type="binding site" evidence="1">
    <location>
        <position position="185"/>
    </location>
    <ligand>
        <name>Fe-coproporphyrin III</name>
        <dbReference type="ChEBI" id="CHEBI:68438"/>
    </ligand>
</feature>
<evidence type="ECO:0000255" key="1">
    <source>
        <dbReference type="HAMAP-Rule" id="MF_01442"/>
    </source>
</evidence>
<evidence type="ECO:0000269" key="2">
    <source>
    </source>
</evidence>
<evidence type="ECO:0000269" key="3">
    <source>
    </source>
</evidence>
<evidence type="ECO:0000303" key="4">
    <source>
    </source>
</evidence>
<evidence type="ECO:0000303" key="5">
    <source>
    </source>
</evidence>
<evidence type="ECO:0000305" key="6"/>
<evidence type="ECO:0000305" key="7">
    <source>
    </source>
</evidence>
<protein>
    <recommendedName>
        <fullName evidence="1 5">Coproheme decarboxylase</fullName>
        <ecNumber evidence="1 2">1.3.98.5</ecNumber>
    </recommendedName>
    <alternativeName>
        <fullName evidence="1 6">Coproheme III oxidative decarboxylase</fullName>
    </alternativeName>
    <alternativeName>
        <fullName evidence="4">Fe-coproporphyrin III oxidase/dehydrogenase</fullName>
    </alternativeName>
    <alternativeName>
        <fullName evidence="1 6">Hydrogen peroxide-dependent heme synthase</fullName>
    </alternativeName>
</protein>
<accession>Q2G0J1</accession>
<dbReference type="EC" id="1.3.98.5" evidence="1 2"/>
<dbReference type="EMBL" id="CP000253">
    <property type="protein sequence ID" value="ABD29716.1"/>
    <property type="molecule type" value="Genomic_DNA"/>
</dbReference>
<dbReference type="RefSeq" id="WP_000075703.1">
    <property type="nucleotide sequence ID" value="NZ_LS483365.1"/>
</dbReference>
<dbReference type="RefSeq" id="YP_499141.1">
    <property type="nucleotide sequence ID" value="NC_007795.1"/>
</dbReference>
<dbReference type="SMR" id="Q2G0J1"/>
<dbReference type="STRING" id="93061.SAOUHSC_00573"/>
<dbReference type="PaxDb" id="1280-SAXN108_0643"/>
<dbReference type="GeneID" id="3920614"/>
<dbReference type="KEGG" id="sao:SAOUHSC_00573"/>
<dbReference type="PATRIC" id="fig|93061.5.peg.516"/>
<dbReference type="eggNOG" id="COG3253">
    <property type="taxonomic scope" value="Bacteria"/>
</dbReference>
<dbReference type="HOGENOM" id="CLU_063226_1_0_9"/>
<dbReference type="OrthoDB" id="9773646at2"/>
<dbReference type="UniPathway" id="UPA00252"/>
<dbReference type="PRO" id="PR:Q2G0J1"/>
<dbReference type="Proteomes" id="UP000008816">
    <property type="component" value="Chromosome"/>
</dbReference>
<dbReference type="GO" id="GO:0020037">
    <property type="term" value="F:heme binding"/>
    <property type="evidence" value="ECO:0007669"/>
    <property type="project" value="InterPro"/>
</dbReference>
<dbReference type="GO" id="GO:0046872">
    <property type="term" value="F:metal ion binding"/>
    <property type="evidence" value="ECO:0007669"/>
    <property type="project" value="UniProtKB-KW"/>
</dbReference>
<dbReference type="GO" id="GO:0016634">
    <property type="term" value="F:oxidoreductase activity, acting on the CH-CH group of donors, oxygen as acceptor"/>
    <property type="evidence" value="ECO:0007669"/>
    <property type="project" value="UniProtKB-UniRule"/>
</dbReference>
<dbReference type="GO" id="GO:0004601">
    <property type="term" value="F:peroxidase activity"/>
    <property type="evidence" value="ECO:0007669"/>
    <property type="project" value="InterPro"/>
</dbReference>
<dbReference type="GO" id="GO:0006785">
    <property type="term" value="P:heme B biosynthetic process"/>
    <property type="evidence" value="ECO:0007669"/>
    <property type="project" value="UniProtKB-UniRule"/>
</dbReference>
<dbReference type="Gene3D" id="3.30.70.1030">
    <property type="entry name" value="Apc35880, domain 1"/>
    <property type="match status" value="2"/>
</dbReference>
<dbReference type="HAMAP" id="MF_01442">
    <property type="entry name" value="Coproheme_decarbox_1"/>
    <property type="match status" value="1"/>
</dbReference>
<dbReference type="InterPro" id="IPR031332">
    <property type="entry name" value="CHDC"/>
</dbReference>
<dbReference type="InterPro" id="IPR010644">
    <property type="entry name" value="ChdC/CLD"/>
</dbReference>
<dbReference type="InterPro" id="IPR011008">
    <property type="entry name" value="Dimeric_a/b-barrel"/>
</dbReference>
<dbReference type="NCBIfam" id="NF008913">
    <property type="entry name" value="PRK12276.1"/>
    <property type="match status" value="1"/>
</dbReference>
<dbReference type="PANTHER" id="PTHR36843:SF1">
    <property type="entry name" value="COPROHEME DECARBOXYLASE"/>
    <property type="match status" value="1"/>
</dbReference>
<dbReference type="PANTHER" id="PTHR36843">
    <property type="entry name" value="HEME-DEPENDENT PEROXIDASE YWFI-RELATED"/>
    <property type="match status" value="1"/>
</dbReference>
<dbReference type="Pfam" id="PF06778">
    <property type="entry name" value="Chlor_dismutase"/>
    <property type="match status" value="1"/>
</dbReference>
<dbReference type="SUPFAM" id="SSF54909">
    <property type="entry name" value="Dimeric alpha+beta barrel"/>
    <property type="match status" value="1"/>
</dbReference>
<sequence>MSQAAETLDGWYSLHLFYAVDWASLRIVPKDERDALVTEFQSFLENTATVRSSKSGDQAIYNITGQKADLLLWFLRPEMKSLNHIENEFNKLRIADFLIPTYSYVSVIELSNYLAGKSDEDPYENPHIKARLYPELPHSDYICFYPMNKRRNETYNWYMLTMEERQKLMYDHGMIGRKYAGKIKQFITGSVGFDDFEWGVTLFSDDVLQFKKIVYEMRFDETTARYGEFGSFFVGHIINTNEFDQFFAIS</sequence>
<reference key="1">
    <citation type="book" date="2006" name="Gram positive pathogens, 2nd edition">
        <title>The Staphylococcus aureus NCTC 8325 genome.</title>
        <editorList>
            <person name="Fischetti V."/>
            <person name="Novick R."/>
            <person name="Ferretti J."/>
            <person name="Portnoy D."/>
            <person name="Rood J."/>
        </editorList>
        <authorList>
            <person name="Gillaspy A.F."/>
            <person name="Worrell V."/>
            <person name="Orvis J."/>
            <person name="Roe B.A."/>
            <person name="Dyer D.W."/>
            <person name="Iandolo J.J."/>
        </authorList>
    </citation>
    <scope>NUCLEOTIDE SEQUENCE [LARGE SCALE GENOMIC DNA]</scope>
    <source>
        <strain>NCTC 8325 / PS 47</strain>
    </source>
</reference>
<reference key="2">
    <citation type="journal article" date="2015" name="Mol. Microbiol.">
        <title>Staphylococcus aureus haem biosynthesis: characterisation of the enzymes involved in final steps of the pathway.</title>
        <authorList>
            <person name="Lobo S.A."/>
            <person name="Scott A."/>
            <person name="Videira M.A."/>
            <person name="Winpenny D."/>
            <person name="Gardner M."/>
            <person name="Palmer M.J."/>
            <person name="Schroeder S."/>
            <person name="Lawrence A.D."/>
            <person name="Parkinson T."/>
            <person name="Warren M.J."/>
            <person name="Saraiva L.M."/>
        </authorList>
    </citation>
    <scope>FUNCTION</scope>
    <scope>CATALYTIC ACTIVITY</scope>
    <scope>COFACTOR</scope>
    <scope>PATHWAY</scope>
    <source>
        <strain>NCTC 8325 / PS 47</strain>
    </source>
</reference>
<reference key="3">
    <citation type="journal article" date="2016" name="Biochem. J.">
        <title>The HemQ coprohaem decarboxylase generates reactive oxygen species: implications for the evolution of classical haem biosynthesis.</title>
        <authorList>
            <person name="Hobbs C."/>
            <person name="Dailey H.A."/>
            <person name="Shepherd M."/>
        </authorList>
    </citation>
    <scope>FUNCTION</scope>
</reference>
<organism>
    <name type="scientific">Staphylococcus aureus (strain NCTC 8325 / PS 47)</name>
    <dbReference type="NCBI Taxonomy" id="93061"/>
    <lineage>
        <taxon>Bacteria</taxon>
        <taxon>Bacillati</taxon>
        <taxon>Bacillota</taxon>
        <taxon>Bacilli</taxon>
        <taxon>Bacillales</taxon>
        <taxon>Staphylococcaceae</taxon>
        <taxon>Staphylococcus</taxon>
    </lineage>
</organism>